<dbReference type="EMBL" id="M91283">
    <property type="protein sequence ID" value="AAA49632.1"/>
    <property type="molecule type" value="Genomic_DNA"/>
</dbReference>
<dbReference type="SMR" id="P28127"/>
<dbReference type="GlyCosmos" id="P28127">
    <property type="glycosylation" value="1 site, No reported glycans"/>
</dbReference>
<dbReference type="HOGENOM" id="CLU_033039_1_4_1"/>
<dbReference type="InParanoid" id="P28127"/>
<dbReference type="Proteomes" id="UP000001645">
    <property type="component" value="Unplaced"/>
</dbReference>
<dbReference type="GO" id="GO:0005615">
    <property type="term" value="C:extracellular space"/>
    <property type="evidence" value="ECO:0007669"/>
    <property type="project" value="TreeGrafter"/>
</dbReference>
<dbReference type="GO" id="GO:0005125">
    <property type="term" value="F:cytokine activity"/>
    <property type="evidence" value="ECO:0007669"/>
    <property type="project" value="TreeGrafter"/>
</dbReference>
<dbReference type="GO" id="GO:0005109">
    <property type="term" value="F:frizzled binding"/>
    <property type="evidence" value="ECO:0007669"/>
    <property type="project" value="TreeGrafter"/>
</dbReference>
<dbReference type="GO" id="GO:0060070">
    <property type="term" value="P:canonical Wnt signaling pathway"/>
    <property type="evidence" value="ECO:0007669"/>
    <property type="project" value="TreeGrafter"/>
</dbReference>
<dbReference type="GO" id="GO:0045165">
    <property type="term" value="P:cell fate commitment"/>
    <property type="evidence" value="ECO:0007669"/>
    <property type="project" value="TreeGrafter"/>
</dbReference>
<dbReference type="GO" id="GO:0030182">
    <property type="term" value="P:neuron differentiation"/>
    <property type="evidence" value="ECO:0007669"/>
    <property type="project" value="TreeGrafter"/>
</dbReference>
<dbReference type="FunFam" id="3.30.2460.20:FF:000008">
    <property type="entry name" value="Protein Wnt-4"/>
    <property type="match status" value="1"/>
</dbReference>
<dbReference type="Gene3D" id="3.30.2460.20">
    <property type="match status" value="1"/>
</dbReference>
<dbReference type="InterPro" id="IPR005817">
    <property type="entry name" value="Wnt"/>
</dbReference>
<dbReference type="InterPro" id="IPR043158">
    <property type="entry name" value="Wnt_C"/>
</dbReference>
<dbReference type="PANTHER" id="PTHR12027:SF101">
    <property type="entry name" value="PROTEIN WNT-4"/>
    <property type="match status" value="1"/>
</dbReference>
<dbReference type="PANTHER" id="PTHR12027">
    <property type="entry name" value="WNT RELATED"/>
    <property type="match status" value="1"/>
</dbReference>
<dbReference type="Pfam" id="PF00110">
    <property type="entry name" value="wnt"/>
    <property type="match status" value="1"/>
</dbReference>
<dbReference type="SMART" id="SM00097">
    <property type="entry name" value="WNT1"/>
    <property type="match status" value="1"/>
</dbReference>
<protein>
    <recommendedName>
        <fullName>Protein Wnt-4</fullName>
    </recommendedName>
</protein>
<accession>P28127</accession>
<reference key="1">
    <citation type="journal article" date="1992" name="Proc. Natl. Acad. Sci. U.S.A.">
        <title>Diversification of the Wnt gene family on the ancestral lineage of vertebrates.</title>
        <authorList>
            <person name="Sidow A."/>
        </authorList>
    </citation>
    <scope>NUCLEOTIDE SEQUENCE [GENOMIC DNA]</scope>
</reference>
<organism>
    <name type="scientific">Meleagris gallopavo</name>
    <name type="common">Wild turkey</name>
    <dbReference type="NCBI Taxonomy" id="9103"/>
    <lineage>
        <taxon>Eukaryota</taxon>
        <taxon>Metazoa</taxon>
        <taxon>Chordata</taxon>
        <taxon>Craniata</taxon>
        <taxon>Vertebrata</taxon>
        <taxon>Euteleostomi</taxon>
        <taxon>Archelosauria</taxon>
        <taxon>Archosauria</taxon>
        <taxon>Dinosauria</taxon>
        <taxon>Saurischia</taxon>
        <taxon>Theropoda</taxon>
        <taxon>Coelurosauria</taxon>
        <taxon>Aves</taxon>
        <taxon>Neognathae</taxon>
        <taxon>Galloanserae</taxon>
        <taxon>Galliformes</taxon>
        <taxon>Phasianidae</taxon>
        <taxon>Meleagridinae</taxon>
        <taxon>Meleagris</taxon>
    </lineage>
</organism>
<comment type="function">
    <text evidence="1 6">Ligand for members of the frizzled family of seven transmembrane receptors (Probable). Plays an important role in embryonic development (By similarity).</text>
</comment>
<comment type="subcellular location">
    <subcellularLocation>
        <location>Secreted</location>
        <location>Extracellular space</location>
        <location>Extracellular matrix</location>
    </subcellularLocation>
</comment>
<comment type="PTM">
    <text evidence="2 4">Palmitoleoylation is required for efficient binding to frizzled receptors. Depalmitoleoylation leads to Wnt signaling pathway inhibition.</text>
</comment>
<comment type="similarity">
    <text evidence="6">Belongs to the Wnt family.</text>
</comment>
<proteinExistence type="inferred from homology"/>
<keyword id="KW-0217">Developmental protein</keyword>
<keyword id="KW-1015">Disulfide bond</keyword>
<keyword id="KW-0272">Extracellular matrix</keyword>
<keyword id="KW-0325">Glycoprotein</keyword>
<keyword id="KW-0449">Lipoprotein</keyword>
<keyword id="KW-1185">Reference proteome</keyword>
<keyword id="KW-0964">Secreted</keyword>
<keyword id="KW-0879">Wnt signaling pathway</keyword>
<gene>
    <name type="primary">WNT4</name>
</gene>
<name>WNT4_MELGA</name>
<feature type="chain" id="PRO_0000200624" description="Protein Wnt-4">
    <location>
        <begin position="1" status="less than"/>
        <end position="119" status="greater than"/>
    </location>
</feature>
<feature type="lipid moiety-binding region" description="O-palmitoleoyl serine; by PORCN" evidence="4">
    <location>
        <position position="1"/>
    </location>
</feature>
<feature type="glycosylation site" description="N-linked (GlcNAc...) asparagine" evidence="5">
    <location>
        <position position="86"/>
    </location>
</feature>
<feature type="disulfide bond" evidence="3">
    <location>
        <begin position="69"/>
        <end position="100"/>
    </location>
</feature>
<feature type="disulfide bond" evidence="3">
    <location>
        <begin position="85"/>
        <end position="95"/>
    </location>
</feature>
<feature type="non-terminal residue">
    <location>
        <position position="1"/>
    </location>
</feature>
<feature type="non-terminal residue">
    <location>
        <position position="119"/>
    </location>
</feature>
<evidence type="ECO:0000250" key="1">
    <source>
        <dbReference type="UniProtKB" id="P22724"/>
    </source>
</evidence>
<evidence type="ECO:0000250" key="2">
    <source>
        <dbReference type="UniProtKB" id="P27467"/>
    </source>
</evidence>
<evidence type="ECO:0000250" key="3">
    <source>
        <dbReference type="UniProtKB" id="P28026"/>
    </source>
</evidence>
<evidence type="ECO:0000250" key="4">
    <source>
        <dbReference type="UniProtKB" id="P56704"/>
    </source>
</evidence>
<evidence type="ECO:0000255" key="5"/>
<evidence type="ECO:0000305" key="6"/>
<sequence>SGSCEFKTCWKAMPPFRKVGNVLKEKFDGATEVEQSEIGSTKVLVPKNSQFKPHTDEDLVYLDSSPDFCDHDLKNGVLGTSGRQCNKTSKAIDGCELMCCGRGFHTDEVEVVERCSCKF</sequence>